<sequence length="272" mass="30094">MLEQPIGVIDSGVGGLTVAKEIMRQLPKENIIYVGDTKRCPYGPRPEEEVLQYTWEMTDYLLENHHIKMLVIACNTATAIALEDIQRKTDIPVVGVIQPGARTAIKVTKNQHIGVIGTVNTIKSRAYEQALLGLNAELQVENTACPLLVPFVESGRFLQESAEEAVEASLEPLKGTSIDTLILGCTHYPILKDPIQNYMGEHVKIISSGDETAREVSTILSYKGLLNQSKHAPEHQFLTTGERNGFAKIAEDWFGHEIGHVECISLQEPVRK</sequence>
<proteinExistence type="inferred from homology"/>
<protein>
    <recommendedName>
        <fullName evidence="1">Glutamate racemase</fullName>
        <ecNumber evidence="1">5.1.1.3</ecNumber>
    </recommendedName>
</protein>
<evidence type="ECO:0000255" key="1">
    <source>
        <dbReference type="HAMAP-Rule" id="MF_00258"/>
    </source>
</evidence>
<feature type="chain" id="PRO_1000047542" description="Glutamate racemase">
    <location>
        <begin position="1"/>
        <end position="272"/>
    </location>
</feature>
<feature type="active site" description="Proton donor/acceptor" evidence="1">
    <location>
        <position position="74"/>
    </location>
</feature>
<feature type="active site" description="Proton donor/acceptor" evidence="1">
    <location>
        <position position="185"/>
    </location>
</feature>
<feature type="binding site" evidence="1">
    <location>
        <begin position="10"/>
        <end position="11"/>
    </location>
    <ligand>
        <name>substrate</name>
    </ligand>
</feature>
<feature type="binding site" evidence="1">
    <location>
        <begin position="42"/>
        <end position="43"/>
    </location>
    <ligand>
        <name>substrate</name>
    </ligand>
</feature>
<feature type="binding site" evidence="1">
    <location>
        <begin position="75"/>
        <end position="76"/>
    </location>
    <ligand>
        <name>substrate</name>
    </ligand>
</feature>
<feature type="binding site" evidence="1">
    <location>
        <begin position="186"/>
        <end position="187"/>
    </location>
    <ligand>
        <name>substrate</name>
    </ligand>
</feature>
<name>MURI_BACVZ</name>
<accession>A7Z7C8</accession>
<keyword id="KW-0133">Cell shape</keyword>
<keyword id="KW-0961">Cell wall biogenesis/degradation</keyword>
<keyword id="KW-0413">Isomerase</keyword>
<keyword id="KW-0573">Peptidoglycan synthesis</keyword>
<gene>
    <name evidence="1" type="primary">murI</name>
    <name type="ordered locus">RBAM_025460</name>
</gene>
<comment type="function">
    <text evidence="1">Provides the (R)-glutamate required for cell wall biosynthesis.</text>
</comment>
<comment type="catalytic activity">
    <reaction evidence="1">
        <text>L-glutamate = D-glutamate</text>
        <dbReference type="Rhea" id="RHEA:12813"/>
        <dbReference type="ChEBI" id="CHEBI:29985"/>
        <dbReference type="ChEBI" id="CHEBI:29986"/>
        <dbReference type="EC" id="5.1.1.3"/>
    </reaction>
</comment>
<comment type="pathway">
    <text evidence="1">Cell wall biogenesis; peptidoglycan biosynthesis.</text>
</comment>
<comment type="similarity">
    <text evidence="1">Belongs to the aspartate/glutamate racemases family.</text>
</comment>
<dbReference type="EC" id="5.1.1.3" evidence="1"/>
<dbReference type="EMBL" id="CP000560">
    <property type="protein sequence ID" value="ABS74904.1"/>
    <property type="molecule type" value="Genomic_DNA"/>
</dbReference>
<dbReference type="SMR" id="A7Z7C8"/>
<dbReference type="KEGG" id="bay:RBAM_025460"/>
<dbReference type="HOGENOM" id="CLU_052344_0_1_9"/>
<dbReference type="UniPathway" id="UPA00219"/>
<dbReference type="Proteomes" id="UP000001120">
    <property type="component" value="Chromosome"/>
</dbReference>
<dbReference type="GO" id="GO:0008881">
    <property type="term" value="F:glutamate racemase activity"/>
    <property type="evidence" value="ECO:0007669"/>
    <property type="project" value="UniProtKB-UniRule"/>
</dbReference>
<dbReference type="GO" id="GO:0071555">
    <property type="term" value="P:cell wall organization"/>
    <property type="evidence" value="ECO:0007669"/>
    <property type="project" value="UniProtKB-KW"/>
</dbReference>
<dbReference type="GO" id="GO:0009252">
    <property type="term" value="P:peptidoglycan biosynthetic process"/>
    <property type="evidence" value="ECO:0007669"/>
    <property type="project" value="UniProtKB-UniRule"/>
</dbReference>
<dbReference type="GO" id="GO:0008360">
    <property type="term" value="P:regulation of cell shape"/>
    <property type="evidence" value="ECO:0007669"/>
    <property type="project" value="UniProtKB-KW"/>
</dbReference>
<dbReference type="FunFam" id="3.40.50.1860:FF:000002">
    <property type="entry name" value="Glutamate racemase"/>
    <property type="match status" value="1"/>
</dbReference>
<dbReference type="Gene3D" id="3.40.50.1860">
    <property type="match status" value="2"/>
</dbReference>
<dbReference type="HAMAP" id="MF_00258">
    <property type="entry name" value="Glu_racemase"/>
    <property type="match status" value="1"/>
</dbReference>
<dbReference type="InterPro" id="IPR015942">
    <property type="entry name" value="Asp/Glu/hydantoin_racemase"/>
</dbReference>
<dbReference type="InterPro" id="IPR001920">
    <property type="entry name" value="Asp/Glu_race"/>
</dbReference>
<dbReference type="InterPro" id="IPR018187">
    <property type="entry name" value="Asp/Glu_racemase_AS_1"/>
</dbReference>
<dbReference type="InterPro" id="IPR033134">
    <property type="entry name" value="Asp/Glu_racemase_AS_2"/>
</dbReference>
<dbReference type="InterPro" id="IPR004391">
    <property type="entry name" value="Glu_race"/>
</dbReference>
<dbReference type="NCBIfam" id="TIGR00067">
    <property type="entry name" value="glut_race"/>
    <property type="match status" value="1"/>
</dbReference>
<dbReference type="NCBIfam" id="NF002035">
    <property type="entry name" value="PRK00865.1-3"/>
    <property type="match status" value="1"/>
</dbReference>
<dbReference type="PANTHER" id="PTHR21198">
    <property type="entry name" value="GLUTAMATE RACEMASE"/>
    <property type="match status" value="1"/>
</dbReference>
<dbReference type="PANTHER" id="PTHR21198:SF2">
    <property type="entry name" value="GLUTAMATE RACEMASE"/>
    <property type="match status" value="1"/>
</dbReference>
<dbReference type="Pfam" id="PF01177">
    <property type="entry name" value="Asp_Glu_race"/>
    <property type="match status" value="1"/>
</dbReference>
<dbReference type="SUPFAM" id="SSF53681">
    <property type="entry name" value="Aspartate/glutamate racemase"/>
    <property type="match status" value="2"/>
</dbReference>
<dbReference type="PROSITE" id="PS00923">
    <property type="entry name" value="ASP_GLU_RACEMASE_1"/>
    <property type="match status" value="1"/>
</dbReference>
<dbReference type="PROSITE" id="PS00924">
    <property type="entry name" value="ASP_GLU_RACEMASE_2"/>
    <property type="match status" value="1"/>
</dbReference>
<organism>
    <name type="scientific">Bacillus velezensis (strain DSM 23117 / BGSC 10A6 / LMG 26770 / FZB42)</name>
    <name type="common">Bacillus amyloliquefaciens subsp. plantarum</name>
    <dbReference type="NCBI Taxonomy" id="326423"/>
    <lineage>
        <taxon>Bacteria</taxon>
        <taxon>Bacillati</taxon>
        <taxon>Bacillota</taxon>
        <taxon>Bacilli</taxon>
        <taxon>Bacillales</taxon>
        <taxon>Bacillaceae</taxon>
        <taxon>Bacillus</taxon>
        <taxon>Bacillus amyloliquefaciens group</taxon>
    </lineage>
</organism>
<reference key="1">
    <citation type="journal article" date="2007" name="Nat. Biotechnol.">
        <title>Comparative analysis of the complete genome sequence of the plant growth-promoting bacterium Bacillus amyloliquefaciens FZB42.</title>
        <authorList>
            <person name="Chen X.H."/>
            <person name="Koumoutsi A."/>
            <person name="Scholz R."/>
            <person name="Eisenreich A."/>
            <person name="Schneider K."/>
            <person name="Heinemeyer I."/>
            <person name="Morgenstern B."/>
            <person name="Voss B."/>
            <person name="Hess W.R."/>
            <person name="Reva O."/>
            <person name="Junge H."/>
            <person name="Voigt B."/>
            <person name="Jungblut P.R."/>
            <person name="Vater J."/>
            <person name="Suessmuth R."/>
            <person name="Liesegang H."/>
            <person name="Strittmatter A."/>
            <person name="Gottschalk G."/>
            <person name="Borriss R."/>
        </authorList>
    </citation>
    <scope>NUCLEOTIDE SEQUENCE [LARGE SCALE GENOMIC DNA]</scope>
    <source>
        <strain>DSM 23117 / BGSC 10A6 / LMG 26770 / FZB42</strain>
    </source>
</reference>